<accession>Q02585</accession>
<sequence>MASSTLSPVTQLCSSKSGLSSVSQCLLLKPMKINSHGLGKDKRMKVKCMATSIPADDRVPDMEKRNLMNLLLLGALSLPTAGMLVPYATFFAPPGSGGGSGGTPAKDALGNDVIASEWLKTHPPGNRTLTQGLKGDPTYLVVENDGTLATYGINAVCTHLGCVVPFNAAENKFICPCHGSQYNNQGRVVRGPAPLSLALAHADIDDGKVVFVPWVETDFRTGEAPWWA</sequence>
<reference key="1">
    <citation type="journal article" date="1992" name="Plant Mol. Biol.">
        <title>Import and processing of the precursor of the Rieske FeS protein of tobacco chloroplasts.</title>
        <authorList>
            <person name="Madueo F."/>
            <person name="Napier J.A."/>
            <person name="Cejudo F.J."/>
            <person name="Gray J.C."/>
        </authorList>
    </citation>
    <scope>NUCLEOTIDE SEQUENCE [MRNA]</scope>
    <source>
        <tissue>Leaf</tissue>
    </source>
</reference>
<feature type="transit peptide" description="Chloroplast">
    <location>
        <begin position="1"/>
        <end position="49"/>
    </location>
</feature>
<feature type="chain" id="PRO_0000030695" description="Cytochrome b6-f complex iron-sulfur subunit 2, chloroplastic">
    <location>
        <begin position="50"/>
        <end position="228"/>
    </location>
</feature>
<feature type="transmembrane region" description="Helical" evidence="2">
    <location>
        <begin position="71"/>
        <end position="91"/>
    </location>
</feature>
<feature type="domain" description="Rieske">
    <location>
        <begin position="115"/>
        <end position="211"/>
    </location>
</feature>
<feature type="binding site" evidence="1">
    <location>
        <position position="157"/>
    </location>
    <ligand>
        <name>[2Fe-2S] cluster</name>
        <dbReference type="ChEBI" id="CHEBI:190135"/>
    </ligand>
</feature>
<feature type="binding site" evidence="1">
    <location>
        <position position="159"/>
    </location>
    <ligand>
        <name>[2Fe-2S] cluster</name>
        <dbReference type="ChEBI" id="CHEBI:190135"/>
    </ligand>
</feature>
<feature type="binding site" evidence="1">
    <location>
        <position position="175"/>
    </location>
    <ligand>
        <name>[2Fe-2S] cluster</name>
        <dbReference type="ChEBI" id="CHEBI:190135"/>
    </ligand>
</feature>
<feature type="binding site" evidence="1">
    <location>
        <position position="178"/>
    </location>
    <ligand>
        <name>[2Fe-2S] cluster</name>
        <dbReference type="ChEBI" id="CHEBI:190135"/>
    </ligand>
</feature>
<feature type="disulfide bond" evidence="1">
    <location>
        <begin position="162"/>
        <end position="177"/>
    </location>
</feature>
<gene>
    <name type="primary">petC2</name>
</gene>
<evidence type="ECO:0000250" key="1"/>
<evidence type="ECO:0000255" key="2"/>
<evidence type="ECO:0000255" key="3">
    <source>
        <dbReference type="HAMAP-Rule" id="MF_01335"/>
    </source>
</evidence>
<keyword id="KW-0001">2Fe-2S</keyword>
<keyword id="KW-0150">Chloroplast</keyword>
<keyword id="KW-1015">Disulfide bond</keyword>
<keyword id="KW-0249">Electron transport</keyword>
<keyword id="KW-0408">Iron</keyword>
<keyword id="KW-0411">Iron-sulfur</keyword>
<keyword id="KW-0472">Membrane</keyword>
<keyword id="KW-0479">Metal-binding</keyword>
<keyword id="KW-0934">Plastid</keyword>
<keyword id="KW-1185">Reference proteome</keyword>
<keyword id="KW-0793">Thylakoid</keyword>
<keyword id="KW-0809">Transit peptide</keyword>
<keyword id="KW-1278">Translocase</keyword>
<keyword id="KW-0812">Transmembrane</keyword>
<keyword id="KW-1133">Transmembrane helix</keyword>
<keyword id="KW-0813">Transport</keyword>
<comment type="function">
    <text evidence="1">Component of the cytochrome b6-f complex, which mediates electron transfer between photosystem II (PSII) and photosystem I (PSI), cyclic electron flow around PSI, and state transitions.</text>
</comment>
<comment type="catalytic activity">
    <reaction>
        <text>2 oxidized [plastocyanin] + a plastoquinol + 2 H(+)(in) = 2 reduced [plastocyanin] + a plastoquinone + 4 H(+)(out)</text>
        <dbReference type="Rhea" id="RHEA:22148"/>
        <dbReference type="Rhea" id="RHEA-COMP:9561"/>
        <dbReference type="Rhea" id="RHEA-COMP:9562"/>
        <dbReference type="Rhea" id="RHEA-COMP:10039"/>
        <dbReference type="Rhea" id="RHEA-COMP:10040"/>
        <dbReference type="ChEBI" id="CHEBI:15378"/>
        <dbReference type="ChEBI" id="CHEBI:17757"/>
        <dbReference type="ChEBI" id="CHEBI:29036"/>
        <dbReference type="ChEBI" id="CHEBI:49552"/>
        <dbReference type="ChEBI" id="CHEBI:62192"/>
        <dbReference type="EC" id="7.1.1.6"/>
    </reaction>
</comment>
<comment type="cofactor">
    <cofactor evidence="1">
        <name>[2Fe-2S] cluster</name>
        <dbReference type="ChEBI" id="CHEBI:190135"/>
    </cofactor>
    <text evidence="1">Binds 1 [2Fe-2S] cluster per subunit.</text>
</comment>
<comment type="subunit">
    <text evidence="1">The 4 large subunits of the cytochrome b6-f complex are cytochrome b6, subunit IV (17 kDa polypeptide, petD), cytochrome f and the Rieske protein, while the 4 small subunits are petG, petL, petM and petN. The complex functions as a dimer (By similarity).</text>
</comment>
<comment type="subcellular location">
    <subcellularLocation>
        <location evidence="1">Plastid</location>
        <location evidence="1">Chloroplast thylakoid membrane</location>
        <topology evidence="1">Single-pass membrane protein</topology>
    </subcellularLocation>
    <text evidence="1">The transmembrane helix obliquely spans the membrane in one monomer, and its extrinsic C-terminal domain is part of the other monomer.</text>
</comment>
<comment type="miscellaneous">
    <text>This protein is 1 of 2 subunits of the cytochrome b6-f complex that are encoded in the nucleus.</text>
</comment>
<comment type="miscellaneous">
    <text>The Rieske iron-sulfur protein is a high potential 2Fe-2S protein.</text>
</comment>
<comment type="similarity">
    <text evidence="3">Belongs to the Rieske iron-sulfur protein family.</text>
</comment>
<proteinExistence type="evidence at transcript level"/>
<dbReference type="EC" id="7.1.1.6"/>
<dbReference type="EMBL" id="X66010">
    <property type="protein sequence ID" value="CAA46809.1"/>
    <property type="molecule type" value="mRNA"/>
</dbReference>
<dbReference type="RefSeq" id="NP_001312705.1">
    <property type="nucleotide sequence ID" value="NM_001325776.1"/>
</dbReference>
<dbReference type="SMR" id="Q02585"/>
<dbReference type="STRING" id="4097.Q02585"/>
<dbReference type="PaxDb" id="4097-Q02585"/>
<dbReference type="GeneID" id="107805497"/>
<dbReference type="KEGG" id="nta:107805497"/>
<dbReference type="OMA" id="HASKNCI"/>
<dbReference type="OrthoDB" id="1637982at2759"/>
<dbReference type="PhylomeDB" id="Q02585"/>
<dbReference type="Proteomes" id="UP000084051">
    <property type="component" value="Unplaced"/>
</dbReference>
<dbReference type="GO" id="GO:0009535">
    <property type="term" value="C:chloroplast thylakoid membrane"/>
    <property type="evidence" value="ECO:0007669"/>
    <property type="project" value="UniProtKB-SubCell"/>
</dbReference>
<dbReference type="GO" id="GO:0005886">
    <property type="term" value="C:plasma membrane"/>
    <property type="evidence" value="ECO:0000318"/>
    <property type="project" value="GO_Central"/>
</dbReference>
<dbReference type="GO" id="GO:0051537">
    <property type="term" value="F:2 iron, 2 sulfur cluster binding"/>
    <property type="evidence" value="ECO:0007669"/>
    <property type="project" value="UniProtKB-KW"/>
</dbReference>
<dbReference type="GO" id="GO:0045158">
    <property type="term" value="F:electron transporter, transferring electrons within cytochrome b6/f complex of photosystem II activity"/>
    <property type="evidence" value="ECO:0007669"/>
    <property type="project" value="InterPro"/>
</dbReference>
<dbReference type="GO" id="GO:0046872">
    <property type="term" value="F:metal ion binding"/>
    <property type="evidence" value="ECO:0007669"/>
    <property type="project" value="UniProtKB-KW"/>
</dbReference>
<dbReference type="GO" id="GO:0016491">
    <property type="term" value="F:oxidoreductase activity"/>
    <property type="evidence" value="ECO:0000318"/>
    <property type="project" value="GO_Central"/>
</dbReference>
<dbReference type="GO" id="GO:0009496">
    <property type="term" value="F:plastoquinol--plastocyanin reductase activity"/>
    <property type="evidence" value="ECO:0007669"/>
    <property type="project" value="UniProtKB-EC"/>
</dbReference>
<dbReference type="CDD" id="cd03471">
    <property type="entry name" value="Rieske_cytochrome_b6f"/>
    <property type="match status" value="1"/>
</dbReference>
<dbReference type="FunFam" id="1.20.5.700:FF:000002">
    <property type="entry name" value="Cytochrome b6-f complex iron-sulfur subunit"/>
    <property type="match status" value="1"/>
</dbReference>
<dbReference type="FunFam" id="2.102.10.10:FF:000007">
    <property type="entry name" value="Cytochrome b6-f complex iron-sulfur subunit"/>
    <property type="match status" value="1"/>
</dbReference>
<dbReference type="Gene3D" id="2.102.10.10">
    <property type="entry name" value="Rieske [2Fe-2S] iron-sulphur domain"/>
    <property type="match status" value="1"/>
</dbReference>
<dbReference type="Gene3D" id="1.20.5.700">
    <property type="entry name" value="Single helix bin"/>
    <property type="match status" value="1"/>
</dbReference>
<dbReference type="HAMAP" id="MF_01335">
    <property type="entry name" value="Cytb6_f_Rieske"/>
    <property type="match status" value="1"/>
</dbReference>
<dbReference type="InterPro" id="IPR023960">
    <property type="entry name" value="Cyt_b6_f_Rieske"/>
</dbReference>
<dbReference type="InterPro" id="IPR017941">
    <property type="entry name" value="Rieske_2Fe-2S"/>
</dbReference>
<dbReference type="InterPro" id="IPR036922">
    <property type="entry name" value="Rieske_2Fe-2S_sf"/>
</dbReference>
<dbReference type="InterPro" id="IPR014349">
    <property type="entry name" value="Rieske_Fe-S_prot"/>
</dbReference>
<dbReference type="InterPro" id="IPR005805">
    <property type="entry name" value="Rieske_Fe-S_prot_C"/>
</dbReference>
<dbReference type="NCBIfam" id="NF045928">
    <property type="entry name" value="Cytb6fFeSPetC"/>
    <property type="match status" value="1"/>
</dbReference>
<dbReference type="NCBIfam" id="NF010001">
    <property type="entry name" value="PRK13474.1"/>
    <property type="match status" value="1"/>
</dbReference>
<dbReference type="PANTHER" id="PTHR10134">
    <property type="entry name" value="CYTOCHROME B-C1 COMPLEX SUBUNIT RIESKE, MITOCHONDRIAL"/>
    <property type="match status" value="1"/>
</dbReference>
<dbReference type="Pfam" id="PF00355">
    <property type="entry name" value="Rieske"/>
    <property type="match status" value="1"/>
</dbReference>
<dbReference type="Pfam" id="PF25471">
    <property type="entry name" value="TM_PetC"/>
    <property type="match status" value="1"/>
</dbReference>
<dbReference type="PRINTS" id="PR00162">
    <property type="entry name" value="RIESKE"/>
</dbReference>
<dbReference type="SUPFAM" id="SSF50022">
    <property type="entry name" value="ISP domain"/>
    <property type="match status" value="1"/>
</dbReference>
<dbReference type="PROSITE" id="PS51296">
    <property type="entry name" value="RIESKE"/>
    <property type="match status" value="1"/>
</dbReference>
<organism>
    <name type="scientific">Nicotiana tabacum</name>
    <name type="common">Common tobacco</name>
    <dbReference type="NCBI Taxonomy" id="4097"/>
    <lineage>
        <taxon>Eukaryota</taxon>
        <taxon>Viridiplantae</taxon>
        <taxon>Streptophyta</taxon>
        <taxon>Embryophyta</taxon>
        <taxon>Tracheophyta</taxon>
        <taxon>Spermatophyta</taxon>
        <taxon>Magnoliopsida</taxon>
        <taxon>eudicotyledons</taxon>
        <taxon>Gunneridae</taxon>
        <taxon>Pentapetalae</taxon>
        <taxon>asterids</taxon>
        <taxon>lamiids</taxon>
        <taxon>Solanales</taxon>
        <taxon>Solanaceae</taxon>
        <taxon>Nicotianoideae</taxon>
        <taxon>Nicotianeae</taxon>
        <taxon>Nicotiana</taxon>
    </lineage>
</organism>
<name>UCRIB_TOBAC</name>
<protein>
    <recommendedName>
        <fullName>Cytochrome b6-f complex iron-sulfur subunit 2, chloroplastic</fullName>
        <ecNumber>7.1.1.6</ecNumber>
    </recommendedName>
    <alternativeName>
        <fullName>Plastohydroquinone:plastocyanin oxidoreductase iron-sulfur protein 2</fullName>
    </alternativeName>
    <alternativeName>
        <fullName>Rieske iron-sulfur protein 2</fullName>
        <shortName>ISP 2</shortName>
        <shortName>RISP 2</shortName>
    </alternativeName>
</protein>